<keyword id="KW-0067">ATP-binding</keyword>
<keyword id="KW-0963">Cytoplasm</keyword>
<keyword id="KW-0903">Direct protein sequencing</keyword>
<keyword id="KW-0238">DNA-binding</keyword>
<keyword id="KW-0413">Isomerase</keyword>
<keyword id="KW-0547">Nucleotide-binding</keyword>
<keyword id="KW-1185">Reference proteome</keyword>
<keyword id="KW-0799">Topoisomerase</keyword>
<accession>P22446</accession>
<accession>P75108</accession>
<gene>
    <name evidence="1" type="primary">gyrA</name>
    <name type="ordered locus">MPN_004</name>
    <name type="ORF">MP150</name>
</gene>
<comment type="function">
    <text evidence="1">A type II topoisomerase that negatively supercoils closed circular double-stranded (ds) DNA in an ATP-dependent manner to modulate DNA topology and maintain chromosomes in an underwound state. Negative supercoiling favors strand separation, and DNA replication, transcription, recombination and repair, all of which involve strand separation. Also able to catalyze the interconversion of other topological isomers of dsDNA rings, including catenanes and knotted rings. Type II topoisomerases break and join 2 DNA strands simultaneously in an ATP-dependent manner.</text>
</comment>
<comment type="catalytic activity">
    <reaction evidence="1">
        <text>ATP-dependent breakage, passage and rejoining of double-stranded DNA.</text>
        <dbReference type="EC" id="5.6.2.2"/>
    </reaction>
</comment>
<comment type="subunit">
    <text evidence="1">Heterotetramer, composed of two GyrA and two GyrB chains. In the heterotetramer, GyrA contains the active site tyrosine that forms a transient covalent intermediate with DNA, while GyrB binds cofactors and catalyzes ATP hydrolysis.</text>
</comment>
<comment type="subcellular location">
    <subcellularLocation>
        <location evidence="1">Cytoplasm</location>
    </subcellularLocation>
</comment>
<comment type="miscellaneous">
    <text evidence="1">Few gyrases are as efficient as E.coli at forming negative supercoils. Not all organisms have 2 type II topoisomerases; in organisms with a single type II topoisomerase this enzyme also has to decatenate newly replicated chromosomes.</text>
</comment>
<comment type="similarity">
    <text evidence="1">Belongs to the type II topoisomerase GyrA/ParC subunit family.</text>
</comment>
<sequence>MAKQQDQIDKIRQELAQSAIKNISLSSELERSFMEYAMSVIVARALPDARDGLKPVHRRVLYGAYTGGMHHDRPFKKSARIVGDVMSKFHPHGDMAIYDTMSRMAQDFSLRYLLIDGHGNFGSIDGDRPAAQRYTEARLSKLAGELLRDIDKDTVDFVANYDGEEQEPTVLPAAFPNLLANGSSGIAVGMSTSIPSHNLSELIQGLILLIDNPDCTINDLLGVIKGPDFPTGANIIYTKGIESYFETGKGNVVIRSKVSIEQLPTRAALVVTEIPYMVNKTSLIEKIVELVKAEEITGIADIRDESSREGIRLVIEVKRDTVPEVLLNQLFKSTRLQVRFPVNMLALVKGAPKLLNMKQALTVYLEHQLDVLIRKTQFNLKKYQERFHILSGLLIAALNIDEVIAIIKKSANNQVAMEALHERFGLDEIQARAVLDMRLRSLSVLEVNKLQTEQQELKALIEFCQQVLADKQLQLKLIKEQLTKINEQFGDPRRSEILYGISEDIDDEDLITQENVVITMSTNGYLKRIGVDAYNLQHRGGVGVKGLTTYTDDSISQLLVCSTHSDLLFFTDKGKVYRIRAHQIPPGFRTNKGIPAVNLIKIDKDEKICALISVNDYQNGYFFFCTKNGTIKRTSLSEFANILSIGKRAILFKENDVLFSVIRTSGQDDIFIGSTAGFVVRFHEDTVRPLSRAAMGVLGINLNQCEFVNGLSTSSNGSLLLSVGQNGIGKLTSIDKYRLTKRNAKGVKTLRVTAKTGPVVTTTTVFGNEDLLMISSAGKIVRISLEQLSEQRKNTSGVKLIKLKEKERLETVTIFKKEEAIKTTTATETDDVGSKQITQ</sequence>
<evidence type="ECO:0000255" key="1">
    <source>
        <dbReference type="HAMAP-Rule" id="MF_01897"/>
    </source>
</evidence>
<evidence type="ECO:0000255" key="2">
    <source>
        <dbReference type="PROSITE-ProRule" id="PRU01384"/>
    </source>
</evidence>
<dbReference type="EC" id="5.6.2.2" evidence="1"/>
<dbReference type="EMBL" id="U00089">
    <property type="protein sequence ID" value="AAB95798.1"/>
    <property type="molecule type" value="Genomic_DNA"/>
</dbReference>
<dbReference type="EMBL" id="X53555">
    <property type="protein sequence ID" value="CAA37623.1"/>
    <property type="molecule type" value="Genomic_DNA"/>
</dbReference>
<dbReference type="PIR" id="S73476">
    <property type="entry name" value="S73476"/>
</dbReference>
<dbReference type="RefSeq" id="NP_109692.1">
    <property type="nucleotide sequence ID" value="NC_000912.1"/>
</dbReference>
<dbReference type="RefSeq" id="WP_010874361.1">
    <property type="nucleotide sequence ID" value="NC_000912.1"/>
</dbReference>
<dbReference type="SMR" id="P22446"/>
<dbReference type="IntAct" id="P22446">
    <property type="interactions" value="6"/>
</dbReference>
<dbReference type="STRING" id="272634.MPN_004"/>
<dbReference type="EnsemblBacteria" id="AAB95798">
    <property type="protein sequence ID" value="AAB95798"/>
    <property type="gene ID" value="MPN_004"/>
</dbReference>
<dbReference type="KEGG" id="mpn:MPN_004"/>
<dbReference type="PATRIC" id="fig|272634.6.peg.4"/>
<dbReference type="HOGENOM" id="CLU_002977_6_1_14"/>
<dbReference type="OrthoDB" id="9806486at2"/>
<dbReference type="BioCyc" id="MPNE272634:G1GJ3-7-MONOMER"/>
<dbReference type="Proteomes" id="UP000000808">
    <property type="component" value="Chromosome"/>
</dbReference>
<dbReference type="GO" id="GO:0005694">
    <property type="term" value="C:chromosome"/>
    <property type="evidence" value="ECO:0007669"/>
    <property type="project" value="InterPro"/>
</dbReference>
<dbReference type="GO" id="GO:0005737">
    <property type="term" value="C:cytoplasm"/>
    <property type="evidence" value="ECO:0007669"/>
    <property type="project" value="UniProtKB-SubCell"/>
</dbReference>
<dbReference type="GO" id="GO:0009330">
    <property type="term" value="C:DNA topoisomerase type II (double strand cut, ATP-hydrolyzing) complex"/>
    <property type="evidence" value="ECO:0007669"/>
    <property type="project" value="TreeGrafter"/>
</dbReference>
<dbReference type="GO" id="GO:0005524">
    <property type="term" value="F:ATP binding"/>
    <property type="evidence" value="ECO:0007669"/>
    <property type="project" value="UniProtKB-UniRule"/>
</dbReference>
<dbReference type="GO" id="GO:0003677">
    <property type="term" value="F:DNA binding"/>
    <property type="evidence" value="ECO:0007669"/>
    <property type="project" value="UniProtKB-UniRule"/>
</dbReference>
<dbReference type="GO" id="GO:0034335">
    <property type="term" value="F:DNA negative supercoiling activity"/>
    <property type="evidence" value="ECO:0007669"/>
    <property type="project" value="UniProtKB-ARBA"/>
</dbReference>
<dbReference type="GO" id="GO:0006265">
    <property type="term" value="P:DNA topological change"/>
    <property type="evidence" value="ECO:0007669"/>
    <property type="project" value="UniProtKB-UniRule"/>
</dbReference>
<dbReference type="GO" id="GO:0006261">
    <property type="term" value="P:DNA-templated DNA replication"/>
    <property type="evidence" value="ECO:0007669"/>
    <property type="project" value="UniProtKB-UniRule"/>
</dbReference>
<dbReference type="CDD" id="cd00187">
    <property type="entry name" value="TOP4c"/>
    <property type="match status" value="1"/>
</dbReference>
<dbReference type="FunFam" id="1.10.268.10:FF:000001">
    <property type="entry name" value="DNA gyrase subunit A"/>
    <property type="match status" value="1"/>
</dbReference>
<dbReference type="FunFam" id="3.30.1360.40:FF:000002">
    <property type="entry name" value="DNA gyrase subunit A"/>
    <property type="match status" value="1"/>
</dbReference>
<dbReference type="FunFam" id="2.120.10.90:FF:000005">
    <property type="entry name" value="DNA topoisomerase 4 subunit A"/>
    <property type="match status" value="1"/>
</dbReference>
<dbReference type="Gene3D" id="3.30.1360.40">
    <property type="match status" value="1"/>
</dbReference>
<dbReference type="Gene3D" id="2.120.10.90">
    <property type="entry name" value="DNA gyrase/topoisomerase IV, subunit A, C-terminal"/>
    <property type="match status" value="1"/>
</dbReference>
<dbReference type="Gene3D" id="3.90.199.10">
    <property type="entry name" value="Topoisomerase II, domain 5"/>
    <property type="match status" value="1"/>
</dbReference>
<dbReference type="Gene3D" id="1.10.268.10">
    <property type="entry name" value="Topoisomerase, domain 3"/>
    <property type="match status" value="1"/>
</dbReference>
<dbReference type="HAMAP" id="MF_01897">
    <property type="entry name" value="GyrA"/>
    <property type="match status" value="1"/>
</dbReference>
<dbReference type="InterPro" id="IPR005743">
    <property type="entry name" value="GyrA"/>
</dbReference>
<dbReference type="InterPro" id="IPR006691">
    <property type="entry name" value="GyrA/parC_rep"/>
</dbReference>
<dbReference type="InterPro" id="IPR035516">
    <property type="entry name" value="Gyrase/topoIV_suA_C"/>
</dbReference>
<dbReference type="InterPro" id="IPR013760">
    <property type="entry name" value="Topo_IIA-like_dom_sf"/>
</dbReference>
<dbReference type="InterPro" id="IPR013758">
    <property type="entry name" value="Topo_IIA_A/C_ab"/>
</dbReference>
<dbReference type="InterPro" id="IPR013757">
    <property type="entry name" value="Topo_IIA_A_a_sf"/>
</dbReference>
<dbReference type="InterPro" id="IPR002205">
    <property type="entry name" value="Topo_IIA_dom_A"/>
</dbReference>
<dbReference type="InterPro" id="IPR050220">
    <property type="entry name" value="Type_II_DNA_Topoisomerases"/>
</dbReference>
<dbReference type="NCBIfam" id="TIGR01063">
    <property type="entry name" value="gyrA"/>
    <property type="match status" value="1"/>
</dbReference>
<dbReference type="NCBIfam" id="NF004043">
    <property type="entry name" value="PRK05560.1"/>
    <property type="match status" value="1"/>
</dbReference>
<dbReference type="NCBIfam" id="NF004044">
    <property type="entry name" value="PRK05561.1"/>
    <property type="match status" value="1"/>
</dbReference>
<dbReference type="PANTHER" id="PTHR43493:SF5">
    <property type="entry name" value="DNA GYRASE SUBUNIT A, CHLOROPLASTIC_MITOCHONDRIAL"/>
    <property type="match status" value="1"/>
</dbReference>
<dbReference type="PANTHER" id="PTHR43493">
    <property type="entry name" value="DNA GYRASE/TOPOISOMERASE SUBUNIT A"/>
    <property type="match status" value="1"/>
</dbReference>
<dbReference type="Pfam" id="PF03989">
    <property type="entry name" value="DNA_gyraseA_C"/>
    <property type="match status" value="6"/>
</dbReference>
<dbReference type="Pfam" id="PF00521">
    <property type="entry name" value="DNA_topoisoIV"/>
    <property type="match status" value="1"/>
</dbReference>
<dbReference type="SMART" id="SM00434">
    <property type="entry name" value="TOP4c"/>
    <property type="match status" value="1"/>
</dbReference>
<dbReference type="SUPFAM" id="SSF101904">
    <property type="entry name" value="GyrA/ParC C-terminal domain-like"/>
    <property type="match status" value="1"/>
</dbReference>
<dbReference type="SUPFAM" id="SSF56719">
    <property type="entry name" value="Type II DNA topoisomerase"/>
    <property type="match status" value="1"/>
</dbReference>
<dbReference type="PROSITE" id="PS52040">
    <property type="entry name" value="TOPO_IIA"/>
    <property type="match status" value="1"/>
</dbReference>
<reference key="1">
    <citation type="journal article" date="1996" name="Nucleic Acids Res.">
        <title>Complete sequence analysis of the genome of the bacterium Mycoplasma pneumoniae.</title>
        <authorList>
            <person name="Himmelreich R."/>
            <person name="Hilbert H."/>
            <person name="Plagens H."/>
            <person name="Pirkl E."/>
            <person name="Li B.-C."/>
            <person name="Herrmann R."/>
        </authorList>
    </citation>
    <scope>NUCLEOTIDE SEQUENCE [LARGE SCALE GENOMIC DNA]</scope>
    <source>
        <strain>ATCC 29342 / M129 / Subtype 1</strain>
    </source>
</reference>
<reference key="2">
    <citation type="journal article" date="1990" name="Mol. Microbiol.">
        <title>Mycoplasma pneumoniae DNA gyrase genes.</title>
        <authorList>
            <person name="Colman S.D."/>
            <person name="Hu P.C."/>
            <person name="Bott K.F."/>
        </authorList>
    </citation>
    <scope>NUCLEOTIDE SEQUENCE [GENOMIC DNA] OF 1-156</scope>
</reference>
<reference key="3">
    <citation type="journal article" date="2000" name="Electrophoresis">
        <title>Towards a two-dimensional proteome map of Mycoplasma pneumoniae.</title>
        <authorList>
            <person name="Regula J.T."/>
            <person name="Ueberle B."/>
            <person name="Boguth G."/>
            <person name="Goerg A."/>
            <person name="Schnoelzer M."/>
            <person name="Herrmann R."/>
            <person name="Frank R."/>
        </authorList>
    </citation>
    <scope>PARTIAL PROTEIN SEQUENCE</scope>
    <scope>IDENTIFICATION BY MASS SPECTROMETRY</scope>
    <source>
        <strain>ATCC 29342 / M129 / Subtype 1</strain>
    </source>
</reference>
<organism>
    <name type="scientific">Mycoplasma pneumoniae (strain ATCC 29342 / M129 / Subtype 1)</name>
    <name type="common">Mycoplasmoides pneumoniae</name>
    <dbReference type="NCBI Taxonomy" id="272634"/>
    <lineage>
        <taxon>Bacteria</taxon>
        <taxon>Bacillati</taxon>
        <taxon>Mycoplasmatota</taxon>
        <taxon>Mycoplasmoidales</taxon>
        <taxon>Mycoplasmoidaceae</taxon>
        <taxon>Mycoplasmoides</taxon>
    </lineage>
</organism>
<feature type="chain" id="PRO_0000145241" description="DNA gyrase subunit A">
    <location>
        <begin position="1"/>
        <end position="839"/>
    </location>
</feature>
<feature type="domain" description="Topo IIA-type catalytic" evidence="2">
    <location>
        <begin position="46"/>
        <end position="510"/>
    </location>
</feature>
<feature type="short sequence motif" description="GyrA-box" evidence="1">
    <location>
        <begin position="537"/>
        <end position="543"/>
    </location>
</feature>
<feature type="active site" description="O-(5'-phospho-DNA)-tyrosine intermediate" evidence="1">
    <location>
        <position position="134"/>
    </location>
</feature>
<protein>
    <recommendedName>
        <fullName evidence="1">DNA gyrase subunit A</fullName>
        <ecNumber evidence="1">5.6.2.2</ecNumber>
    </recommendedName>
</protein>
<proteinExistence type="evidence at protein level"/>
<name>GYRA_MYCPN</name>